<organism>
    <name type="scientific">Arabidopsis thaliana</name>
    <name type="common">Mouse-ear cress</name>
    <dbReference type="NCBI Taxonomy" id="3702"/>
    <lineage>
        <taxon>Eukaryota</taxon>
        <taxon>Viridiplantae</taxon>
        <taxon>Streptophyta</taxon>
        <taxon>Embryophyta</taxon>
        <taxon>Tracheophyta</taxon>
        <taxon>Spermatophyta</taxon>
        <taxon>Magnoliopsida</taxon>
        <taxon>eudicotyledons</taxon>
        <taxon>Gunneridae</taxon>
        <taxon>Pentapetalae</taxon>
        <taxon>rosids</taxon>
        <taxon>malvids</taxon>
        <taxon>Brassicales</taxon>
        <taxon>Brassicaceae</taxon>
        <taxon>Camelineae</taxon>
        <taxon>Arabidopsis</taxon>
    </lineage>
</organism>
<feature type="chain" id="PRO_0000414069" description="WEB family protein At2g40480">
    <location>
        <begin position="1"/>
        <end position="518"/>
    </location>
</feature>
<feature type="region of interest" description="Disordered" evidence="2">
    <location>
        <begin position="303"/>
        <end position="337"/>
    </location>
</feature>
<feature type="coiled-coil region" evidence="1">
    <location>
        <begin position="95"/>
        <end position="141"/>
    </location>
</feature>
<feature type="coiled-coil region" evidence="1">
    <location>
        <begin position="188"/>
        <end position="219"/>
    </location>
</feature>
<feature type="coiled-coil region" evidence="1">
    <location>
        <begin position="344"/>
        <end position="375"/>
    </location>
</feature>
<feature type="compositionally biased region" description="Basic and acidic residues" evidence="2">
    <location>
        <begin position="328"/>
        <end position="337"/>
    </location>
</feature>
<evidence type="ECO:0000255" key="1"/>
<evidence type="ECO:0000256" key="2">
    <source>
        <dbReference type="SAM" id="MobiDB-lite"/>
    </source>
</evidence>
<evidence type="ECO:0000305" key="3"/>
<dbReference type="EMBL" id="AC002336">
    <property type="protein sequence ID" value="AAB87588.1"/>
    <property type="status" value="ALT_SEQ"/>
    <property type="molecule type" value="Genomic_DNA"/>
</dbReference>
<dbReference type="EMBL" id="CP002685">
    <property type="protein sequence ID" value="AEC09836.1"/>
    <property type="molecule type" value="Genomic_DNA"/>
</dbReference>
<dbReference type="EMBL" id="AY735595">
    <property type="protein sequence ID" value="AAU44465.1"/>
    <property type="molecule type" value="mRNA"/>
</dbReference>
<dbReference type="PIR" id="A84830">
    <property type="entry name" value="A84830"/>
</dbReference>
<dbReference type="RefSeq" id="NP_181580.2">
    <property type="nucleotide sequence ID" value="NM_129610.3"/>
</dbReference>
<dbReference type="SMR" id="Q5XVC7"/>
<dbReference type="BioGRID" id="3981">
    <property type="interactions" value="2"/>
</dbReference>
<dbReference type="FunCoup" id="Q5XVC7">
    <property type="interactions" value="138"/>
</dbReference>
<dbReference type="GlyGen" id="Q5XVC7">
    <property type="glycosylation" value="2 sites"/>
</dbReference>
<dbReference type="PaxDb" id="3702-AT2G40480.1"/>
<dbReference type="ProteomicsDB" id="232414"/>
<dbReference type="EnsemblPlants" id="AT2G40480.1">
    <property type="protein sequence ID" value="AT2G40480.1"/>
    <property type="gene ID" value="AT2G40480"/>
</dbReference>
<dbReference type="GeneID" id="818643"/>
<dbReference type="Gramene" id="AT2G40480.1">
    <property type="protein sequence ID" value="AT2G40480.1"/>
    <property type="gene ID" value="AT2G40480"/>
</dbReference>
<dbReference type="KEGG" id="ath:AT2G40480"/>
<dbReference type="Araport" id="AT2G40480"/>
<dbReference type="TAIR" id="AT2G40480"/>
<dbReference type="eggNOG" id="ENOG502RR51">
    <property type="taxonomic scope" value="Eukaryota"/>
</dbReference>
<dbReference type="HOGENOM" id="CLU_017338_2_0_1"/>
<dbReference type="InParanoid" id="Q5XVC7"/>
<dbReference type="OMA" id="FGGRGYW"/>
<dbReference type="PhylomeDB" id="Q5XVC7"/>
<dbReference type="PRO" id="PR:Q5XVC7"/>
<dbReference type="Proteomes" id="UP000006548">
    <property type="component" value="Chromosome 2"/>
</dbReference>
<dbReference type="ExpressionAtlas" id="Q5XVC7">
    <property type="expression patterns" value="baseline and differential"/>
</dbReference>
<dbReference type="InterPro" id="IPR008545">
    <property type="entry name" value="Web"/>
</dbReference>
<dbReference type="PANTHER" id="PTHR32054">
    <property type="entry name" value="HEAVY CHAIN, PUTATIVE, EXPRESSED-RELATED-RELATED"/>
    <property type="match status" value="1"/>
</dbReference>
<dbReference type="PANTHER" id="PTHR32054:SF48">
    <property type="entry name" value="WEB FAMILY PROTEIN"/>
    <property type="match status" value="1"/>
</dbReference>
<dbReference type="Pfam" id="PF05701">
    <property type="entry name" value="WEMBL"/>
    <property type="match status" value="1"/>
</dbReference>
<sequence length="518" mass="58481">MALAEEQHQNYHVAEAIPGTPGIHDVRIQPGSENSGFCVDPVGVSNVPGIRRVGLRAEIDTSPPFGSVQEAVTRFGGRGYWVPFKLDDTFNGEFDIKRMEEHAAELEKDLIVKELETLDVLEALGSTKRIVEDLKRQLQQEALRCSDQLSSDIKEMNDEHCHHNPMSSPDLILMELKQAKMNLGKTMDNLVVIQSSVESLNKKMKEEKDFLEKTRAKLTYGFGGPVSLAEELSRIKVKPQVQDEPLREQVKMVAEADETGLNLQNKNSLRTAEMRLVAARKMEEAAKAAEALAIAEITMLSSNGESQDDDSEFCFPEPPRSPVTPRGLRIDNDFSTDKSSRRGILKKLEEATEGVKQSKQALEAALNRVEIANVKQLAAENAFRGWTKDSLKGDNFTPLNHTRRSFFSHLNKHHEPLDILPKPVLKSNISMRDVLRRKQVPKEDVVAPQRQSLEGQIPRRNVNLSQMLKELKQDVKFSARGEKEEVHEEKQYVTQRRKFGFIHITLPLQKQSKKKSSL</sequence>
<protein>
    <recommendedName>
        <fullName>WEB family protein At2g40480</fullName>
    </recommendedName>
</protein>
<proteinExistence type="evidence at transcript level"/>
<gene>
    <name type="ordered locus">At2g40480</name>
    <name type="ORF">T2P4.17</name>
</gene>
<comment type="similarity">
    <text evidence="3">Belongs to the WEB family.</text>
</comment>
<comment type="sequence caution" evidence="3">
    <conflict type="erroneous gene model prediction">
        <sequence resource="EMBL-CDS" id="AAB87588"/>
    </conflict>
</comment>
<name>Y2048_ARATH</name>
<reference key="1">
    <citation type="journal article" date="1999" name="Nature">
        <title>Sequence and analysis of chromosome 2 of the plant Arabidopsis thaliana.</title>
        <authorList>
            <person name="Lin X."/>
            <person name="Kaul S."/>
            <person name="Rounsley S.D."/>
            <person name="Shea T.P."/>
            <person name="Benito M.-I."/>
            <person name="Town C.D."/>
            <person name="Fujii C.Y."/>
            <person name="Mason T.M."/>
            <person name="Bowman C.L."/>
            <person name="Barnstead M.E."/>
            <person name="Feldblyum T.V."/>
            <person name="Buell C.R."/>
            <person name="Ketchum K.A."/>
            <person name="Lee J.J."/>
            <person name="Ronning C.M."/>
            <person name="Koo H.L."/>
            <person name="Moffat K.S."/>
            <person name="Cronin L.A."/>
            <person name="Shen M."/>
            <person name="Pai G."/>
            <person name="Van Aken S."/>
            <person name="Umayam L."/>
            <person name="Tallon L.J."/>
            <person name="Gill J.E."/>
            <person name="Adams M.D."/>
            <person name="Carrera A.J."/>
            <person name="Creasy T.H."/>
            <person name="Goodman H.M."/>
            <person name="Somerville C.R."/>
            <person name="Copenhaver G.P."/>
            <person name="Preuss D."/>
            <person name="Nierman W.C."/>
            <person name="White O."/>
            <person name="Eisen J.A."/>
            <person name="Salzberg S.L."/>
            <person name="Fraser C.M."/>
            <person name="Venter J.C."/>
        </authorList>
    </citation>
    <scope>NUCLEOTIDE SEQUENCE [LARGE SCALE GENOMIC DNA]</scope>
    <source>
        <strain>cv. Columbia</strain>
    </source>
</reference>
<reference key="2">
    <citation type="journal article" date="2017" name="Plant J.">
        <title>Araport11: a complete reannotation of the Arabidopsis thaliana reference genome.</title>
        <authorList>
            <person name="Cheng C.Y."/>
            <person name="Krishnakumar V."/>
            <person name="Chan A.P."/>
            <person name="Thibaud-Nissen F."/>
            <person name="Schobel S."/>
            <person name="Town C.D."/>
        </authorList>
    </citation>
    <scope>GENOME REANNOTATION</scope>
    <source>
        <strain>cv. Columbia</strain>
    </source>
</reference>
<reference key="3">
    <citation type="submission" date="2004-08" db="EMBL/GenBank/DDBJ databases">
        <title>Reconstruction of cDNA sequences for hypothetical genes in Arabidopsis thaliana from 5' and 3' RACE products.</title>
        <authorList>
            <person name="Xiao Y.-L."/>
            <person name="Underwood B.A."/>
            <person name="Moskal W.A. Jr."/>
            <person name="Wang W."/>
            <person name="Redman J.C."/>
            <person name="Wu H.C."/>
            <person name="Utterback T."/>
            <person name="Town C.D."/>
        </authorList>
    </citation>
    <scope>NUCLEOTIDE SEQUENCE [LARGE SCALE MRNA]</scope>
    <source>
        <strain>cv. Columbia</strain>
    </source>
</reference>
<keyword id="KW-0175">Coiled coil</keyword>
<keyword id="KW-1185">Reference proteome</keyword>
<accession>Q5XVC7</accession>
<accession>O22887</accession>